<proteinExistence type="evidence at protein level"/>
<name>KV5AA_MOUSE</name>
<keyword id="KW-1064">Adaptive immunity</keyword>
<keyword id="KW-0903">Direct protein sequencing</keyword>
<keyword id="KW-1015">Disulfide bond</keyword>
<keyword id="KW-0391">Immunity</keyword>
<keyword id="KW-1280">Immunoglobulin</keyword>
<keyword id="KW-1185">Reference proteome</keyword>
<accession>P01643</accession>
<comment type="miscellaneous">
    <text>This chain was isolated from a myeloma protein.</text>
</comment>
<evidence type="ECO:0000255" key="1">
    <source>
        <dbReference type="PROSITE-ProRule" id="PRU00114"/>
    </source>
</evidence>
<feature type="chain" id="PRO_0000059798" description="Ig kappa chain V-V region MOPC 173">
    <location>
        <begin position="1"/>
        <end position="108" status="greater than"/>
    </location>
</feature>
<feature type="region of interest" description="Framework-1">
    <location>
        <begin position="1"/>
        <end position="23"/>
    </location>
</feature>
<feature type="region of interest" description="Complementarity-determining-1">
    <location>
        <begin position="24"/>
        <end position="34"/>
    </location>
</feature>
<feature type="region of interest" description="Framework-2">
    <location>
        <begin position="35"/>
        <end position="49"/>
    </location>
</feature>
<feature type="region of interest" description="Complementarity-determining-2">
    <location>
        <begin position="50"/>
        <end position="56"/>
    </location>
</feature>
<feature type="region of interest" description="Framework-3">
    <location>
        <begin position="57"/>
        <end position="88"/>
    </location>
</feature>
<feature type="region of interest" description="Complementarity-determining-3">
    <location>
        <begin position="89"/>
        <end position="97"/>
    </location>
</feature>
<feature type="region of interest" description="Framework-4">
    <location>
        <begin position="98"/>
        <end position="108"/>
    </location>
</feature>
<feature type="disulfide bond" evidence="1">
    <location>
        <begin position="23"/>
        <end position="88"/>
    </location>
</feature>
<feature type="non-terminal residue">
    <location>
        <position position="108"/>
    </location>
</feature>
<organism>
    <name type="scientific">Mus musculus</name>
    <name type="common">Mouse</name>
    <dbReference type="NCBI Taxonomy" id="10090"/>
    <lineage>
        <taxon>Eukaryota</taxon>
        <taxon>Metazoa</taxon>
        <taxon>Chordata</taxon>
        <taxon>Craniata</taxon>
        <taxon>Vertebrata</taxon>
        <taxon>Euteleostomi</taxon>
        <taxon>Mammalia</taxon>
        <taxon>Eutheria</taxon>
        <taxon>Euarchontoglires</taxon>
        <taxon>Glires</taxon>
        <taxon>Rodentia</taxon>
        <taxon>Myomorpha</taxon>
        <taxon>Muroidea</taxon>
        <taxon>Muridae</taxon>
        <taxon>Murinae</taxon>
        <taxon>Mus</taxon>
        <taxon>Mus</taxon>
    </lineage>
</organism>
<dbReference type="PIR" id="A01926">
    <property type="entry name" value="KVMS73"/>
</dbReference>
<dbReference type="FunCoup" id="P01643">
    <property type="interactions" value="616"/>
</dbReference>
<dbReference type="InParanoid" id="P01643"/>
<dbReference type="Proteomes" id="UP000000589">
    <property type="component" value="Unplaced"/>
</dbReference>
<dbReference type="RNAct" id="P01643">
    <property type="molecule type" value="protein"/>
</dbReference>
<dbReference type="GO" id="GO:0019814">
    <property type="term" value="C:immunoglobulin complex"/>
    <property type="evidence" value="ECO:0000318"/>
    <property type="project" value="GO_Central"/>
</dbReference>
<dbReference type="GO" id="GO:0002250">
    <property type="term" value="P:adaptive immune response"/>
    <property type="evidence" value="ECO:0007669"/>
    <property type="project" value="UniProtKB-KW"/>
</dbReference>
<dbReference type="GO" id="GO:0006955">
    <property type="term" value="P:immune response"/>
    <property type="evidence" value="ECO:0000318"/>
    <property type="project" value="GO_Central"/>
</dbReference>
<dbReference type="CDD" id="cd04980">
    <property type="entry name" value="IgV_L_kappa"/>
    <property type="match status" value="1"/>
</dbReference>
<dbReference type="FunFam" id="2.60.40.10:FF:000212">
    <property type="entry name" value="Immunoglobulin kappa chain variable 12-38"/>
    <property type="match status" value="1"/>
</dbReference>
<dbReference type="Gene3D" id="2.60.40.10">
    <property type="entry name" value="Immunoglobulins"/>
    <property type="match status" value="1"/>
</dbReference>
<dbReference type="InterPro" id="IPR007110">
    <property type="entry name" value="Ig-like_dom"/>
</dbReference>
<dbReference type="InterPro" id="IPR036179">
    <property type="entry name" value="Ig-like_dom_sf"/>
</dbReference>
<dbReference type="InterPro" id="IPR013783">
    <property type="entry name" value="Ig-like_fold"/>
</dbReference>
<dbReference type="InterPro" id="IPR003599">
    <property type="entry name" value="Ig_sub"/>
</dbReference>
<dbReference type="InterPro" id="IPR013106">
    <property type="entry name" value="Ig_V-set"/>
</dbReference>
<dbReference type="InterPro" id="IPR050150">
    <property type="entry name" value="IgV_Light_Chain"/>
</dbReference>
<dbReference type="PANTHER" id="PTHR23267">
    <property type="entry name" value="IMMUNOGLOBULIN LIGHT CHAIN"/>
    <property type="match status" value="1"/>
</dbReference>
<dbReference type="Pfam" id="PF07686">
    <property type="entry name" value="V-set"/>
    <property type="match status" value="1"/>
</dbReference>
<dbReference type="SMART" id="SM00409">
    <property type="entry name" value="IG"/>
    <property type="match status" value="1"/>
</dbReference>
<dbReference type="SMART" id="SM00406">
    <property type="entry name" value="IGv"/>
    <property type="match status" value="1"/>
</dbReference>
<dbReference type="SUPFAM" id="SSF48726">
    <property type="entry name" value="Immunoglobulin"/>
    <property type="match status" value="1"/>
</dbReference>
<dbReference type="PROSITE" id="PS50835">
    <property type="entry name" value="IG_LIKE"/>
    <property type="match status" value="1"/>
</dbReference>
<reference key="1">
    <citation type="journal article" date="1975" name="Eur. J. Biochem.">
        <title>Determination of the primary structure of a mouse IgG2a immunoglobulin. Amino-acid sequence of the light chain.</title>
        <authorList>
            <person name="Schiff C."/>
            <person name="Fougereau M."/>
        </authorList>
    </citation>
    <scope>PROTEIN SEQUENCE</scope>
</reference>
<sequence>DIQMTQTTSSLSASLGDRVTISCSASQSIGNYLBWYQQKPDGTVKLLIYYTSSLHSGVPSRFSGSGSGTDYSLTISBLZPZBIATYYCQQYSKLPRTFGGGTKLEIKR</sequence>
<protein>
    <recommendedName>
        <fullName>Ig kappa chain V-V region MOPC 173</fullName>
    </recommendedName>
</protein>